<evidence type="ECO:0000269" key="1">
    <source>
    </source>
</evidence>
<protein>
    <recommendedName>
        <fullName>ComG operon repressor</fullName>
    </recommendedName>
</protein>
<comment type="function">
    <text evidence="1">Negatively regulates the transcription of the comG operon.</text>
</comment>
<gene>
    <name type="primary">comZ</name>
    <name type="ordered locus">BSU11310</name>
</gene>
<organism>
    <name type="scientific">Bacillus subtilis (strain 168)</name>
    <dbReference type="NCBI Taxonomy" id="224308"/>
    <lineage>
        <taxon>Bacteria</taxon>
        <taxon>Bacillati</taxon>
        <taxon>Bacillota</taxon>
        <taxon>Bacilli</taxon>
        <taxon>Bacillales</taxon>
        <taxon>Bacillaceae</taxon>
        <taxon>Bacillus</taxon>
    </lineage>
</organism>
<proteinExistence type="predicted"/>
<reference key="1">
    <citation type="journal article" date="1997" name="J. Bacteriol.">
        <title>A new Bacillus subtilis gene, med, encodes a positive regulator of comK.</title>
        <authorList>
            <person name="Ogura M."/>
            <person name="Ohshiro Y."/>
            <person name="Hirao S."/>
            <person name="Tanaka T."/>
        </authorList>
    </citation>
    <scope>NUCLEOTIDE SEQUENCE [GENOMIC DNA]</scope>
    <source>
        <strain>168 / CU741</strain>
    </source>
</reference>
<reference key="2">
    <citation type="journal article" date="1997" name="Nature">
        <title>The complete genome sequence of the Gram-positive bacterium Bacillus subtilis.</title>
        <authorList>
            <person name="Kunst F."/>
            <person name="Ogasawara N."/>
            <person name="Moszer I."/>
            <person name="Albertini A.M."/>
            <person name="Alloni G."/>
            <person name="Azevedo V."/>
            <person name="Bertero M.G."/>
            <person name="Bessieres P."/>
            <person name="Bolotin A."/>
            <person name="Borchert S."/>
            <person name="Borriss R."/>
            <person name="Boursier L."/>
            <person name="Brans A."/>
            <person name="Braun M."/>
            <person name="Brignell S.C."/>
            <person name="Bron S."/>
            <person name="Brouillet S."/>
            <person name="Bruschi C.V."/>
            <person name="Caldwell B."/>
            <person name="Capuano V."/>
            <person name="Carter N.M."/>
            <person name="Choi S.-K."/>
            <person name="Codani J.-J."/>
            <person name="Connerton I.F."/>
            <person name="Cummings N.J."/>
            <person name="Daniel R.A."/>
            <person name="Denizot F."/>
            <person name="Devine K.M."/>
            <person name="Duesterhoeft A."/>
            <person name="Ehrlich S.D."/>
            <person name="Emmerson P.T."/>
            <person name="Entian K.-D."/>
            <person name="Errington J."/>
            <person name="Fabret C."/>
            <person name="Ferrari E."/>
            <person name="Foulger D."/>
            <person name="Fritz C."/>
            <person name="Fujita M."/>
            <person name="Fujita Y."/>
            <person name="Fuma S."/>
            <person name="Galizzi A."/>
            <person name="Galleron N."/>
            <person name="Ghim S.-Y."/>
            <person name="Glaser P."/>
            <person name="Goffeau A."/>
            <person name="Golightly E.J."/>
            <person name="Grandi G."/>
            <person name="Guiseppi G."/>
            <person name="Guy B.J."/>
            <person name="Haga K."/>
            <person name="Haiech J."/>
            <person name="Harwood C.R."/>
            <person name="Henaut A."/>
            <person name="Hilbert H."/>
            <person name="Holsappel S."/>
            <person name="Hosono S."/>
            <person name="Hullo M.-F."/>
            <person name="Itaya M."/>
            <person name="Jones L.-M."/>
            <person name="Joris B."/>
            <person name="Karamata D."/>
            <person name="Kasahara Y."/>
            <person name="Klaerr-Blanchard M."/>
            <person name="Klein C."/>
            <person name="Kobayashi Y."/>
            <person name="Koetter P."/>
            <person name="Koningstein G."/>
            <person name="Krogh S."/>
            <person name="Kumano M."/>
            <person name="Kurita K."/>
            <person name="Lapidus A."/>
            <person name="Lardinois S."/>
            <person name="Lauber J."/>
            <person name="Lazarevic V."/>
            <person name="Lee S.-M."/>
            <person name="Levine A."/>
            <person name="Liu H."/>
            <person name="Masuda S."/>
            <person name="Mauel C."/>
            <person name="Medigue C."/>
            <person name="Medina N."/>
            <person name="Mellado R.P."/>
            <person name="Mizuno M."/>
            <person name="Moestl D."/>
            <person name="Nakai S."/>
            <person name="Noback M."/>
            <person name="Noone D."/>
            <person name="O'Reilly M."/>
            <person name="Ogawa K."/>
            <person name="Ogiwara A."/>
            <person name="Oudega B."/>
            <person name="Park S.-H."/>
            <person name="Parro V."/>
            <person name="Pohl T.M."/>
            <person name="Portetelle D."/>
            <person name="Porwollik S."/>
            <person name="Prescott A.M."/>
            <person name="Presecan E."/>
            <person name="Pujic P."/>
            <person name="Purnelle B."/>
            <person name="Rapoport G."/>
            <person name="Rey M."/>
            <person name="Reynolds S."/>
            <person name="Rieger M."/>
            <person name="Rivolta C."/>
            <person name="Rocha E."/>
            <person name="Roche B."/>
            <person name="Rose M."/>
            <person name="Sadaie Y."/>
            <person name="Sato T."/>
            <person name="Scanlan E."/>
            <person name="Schleich S."/>
            <person name="Schroeter R."/>
            <person name="Scoffone F."/>
            <person name="Sekiguchi J."/>
            <person name="Sekowska A."/>
            <person name="Seror S.J."/>
            <person name="Serror P."/>
            <person name="Shin B.-S."/>
            <person name="Soldo B."/>
            <person name="Sorokin A."/>
            <person name="Tacconi E."/>
            <person name="Takagi T."/>
            <person name="Takahashi H."/>
            <person name="Takemaru K."/>
            <person name="Takeuchi M."/>
            <person name="Tamakoshi A."/>
            <person name="Tanaka T."/>
            <person name="Terpstra P."/>
            <person name="Tognoni A."/>
            <person name="Tosato V."/>
            <person name="Uchiyama S."/>
            <person name="Vandenbol M."/>
            <person name="Vannier F."/>
            <person name="Vassarotti A."/>
            <person name="Viari A."/>
            <person name="Wambutt R."/>
            <person name="Wedler E."/>
            <person name="Wedler H."/>
            <person name="Weitzenegger T."/>
            <person name="Winters P."/>
            <person name="Wipat A."/>
            <person name="Yamamoto H."/>
            <person name="Yamane K."/>
            <person name="Yasumoto K."/>
            <person name="Yata K."/>
            <person name="Yoshida K."/>
            <person name="Yoshikawa H.-F."/>
            <person name="Zumstein E."/>
            <person name="Yoshikawa H."/>
            <person name="Danchin A."/>
        </authorList>
    </citation>
    <scope>NUCLEOTIDE SEQUENCE [LARGE SCALE GENOMIC DNA]</scope>
    <source>
        <strain>168</strain>
    </source>
</reference>
<reference key="3">
    <citation type="journal article" date="2000" name="J. Bacteriol.">
        <title>Bacillus subtilis comZ (yjzA) negatively affects expression of comG but not comK.</title>
        <authorList>
            <person name="Ogura M."/>
            <person name="Tanaka T."/>
        </authorList>
    </citation>
    <scope>FUNCTION</scope>
</reference>
<keyword id="KW-0178">Competence</keyword>
<keyword id="KW-1185">Reference proteome</keyword>
<keyword id="KW-0678">Repressor</keyword>
<keyword id="KW-0804">Transcription</keyword>
<keyword id="KW-0805">Transcription regulation</keyword>
<feature type="chain" id="PRO_0000090017" description="ComG operon repressor">
    <location>
        <begin position="1"/>
        <end position="63"/>
    </location>
</feature>
<feature type="sequence variant" description="In strain: CU741.">
    <original>H</original>
    <variation>Q</variation>
    <location>
        <position position="3"/>
    </location>
</feature>
<name>COMZ_BACSU</name>
<accession>O32437</accession>
<accession>O34395</accession>
<sequence>MQHEKSLEFLQIAMKYLPEAKEQLEKSGIELSMEAIQPFMNLFTTVMAEAYELGKSDAKSETE</sequence>
<dbReference type="EMBL" id="D86376">
    <property type="protein sequence ID" value="BAA22929.1"/>
    <property type="molecule type" value="Genomic_DNA"/>
</dbReference>
<dbReference type="EMBL" id="AL009126">
    <property type="protein sequence ID" value="CAB12972.1"/>
    <property type="molecule type" value="Genomic_DNA"/>
</dbReference>
<dbReference type="PIR" id="D69854">
    <property type="entry name" value="D69854"/>
</dbReference>
<dbReference type="RefSeq" id="NP_389013.1">
    <property type="nucleotide sequence ID" value="NC_000964.3"/>
</dbReference>
<dbReference type="RefSeq" id="WP_003224559.1">
    <property type="nucleotide sequence ID" value="NZ_OZ025638.1"/>
</dbReference>
<dbReference type="SMR" id="O32437"/>
<dbReference type="FunCoup" id="O32437">
    <property type="interactions" value="80"/>
</dbReference>
<dbReference type="STRING" id="224308.BSU11310"/>
<dbReference type="PaxDb" id="224308-BSU11310"/>
<dbReference type="EnsemblBacteria" id="CAB12972">
    <property type="protein sequence ID" value="CAB12972"/>
    <property type="gene ID" value="BSU_11310"/>
</dbReference>
<dbReference type="GeneID" id="86874392"/>
<dbReference type="GeneID" id="939358"/>
<dbReference type="KEGG" id="bsu:BSU11310"/>
<dbReference type="PATRIC" id="fig|224308.179.peg.1216"/>
<dbReference type="eggNOG" id="ENOG502ZW4E">
    <property type="taxonomic scope" value="Bacteria"/>
</dbReference>
<dbReference type="InParanoid" id="O32437"/>
<dbReference type="OrthoDB" id="2887077at2"/>
<dbReference type="BioCyc" id="BSUB:BSU11310-MONOMER"/>
<dbReference type="PRO" id="PR:O32437"/>
<dbReference type="Proteomes" id="UP000001570">
    <property type="component" value="Chromosome"/>
</dbReference>
<dbReference type="GO" id="GO:0030420">
    <property type="term" value="P:establishment of competence for transformation"/>
    <property type="evidence" value="ECO:0007669"/>
    <property type="project" value="UniProtKB-KW"/>
</dbReference>
<dbReference type="InterPro" id="IPR024558">
    <property type="entry name" value="ComZ"/>
</dbReference>
<dbReference type="Pfam" id="PF10815">
    <property type="entry name" value="ComZ"/>
    <property type="match status" value="1"/>
</dbReference>